<keyword id="KW-0963">Cytoplasm</keyword>
<keyword id="KW-0396">Initiation factor</keyword>
<keyword id="KW-0648">Protein biosynthesis</keyword>
<proteinExistence type="inferred from homology"/>
<comment type="function">
    <text evidence="1">IF-3 binds to the 30S ribosomal subunit and shifts the equilibrium between 70S ribosomes and their 50S and 30S subunits in favor of the free subunits, thus enhancing the availability of 30S subunits on which protein synthesis initiation begins.</text>
</comment>
<comment type="subunit">
    <text evidence="1">Monomer.</text>
</comment>
<comment type="subcellular location">
    <subcellularLocation>
        <location evidence="1">Cytoplasm</location>
    </subcellularLocation>
</comment>
<comment type="similarity">
    <text evidence="1">Belongs to the IF-3 family.</text>
</comment>
<comment type="sequence caution" evidence="2">
    <conflict type="erroneous initiation">
        <sequence resource="EMBL-CDS" id="BAC64411"/>
    </conflict>
</comment>
<accession>P0DB87</accession>
<accession>P58081</accession>
<accession>P65147</accession>
<sequence>MKIIAKKDLFINDEIRVREVRLVGLEGEQLGIKPLSEAQSLADASNVDLVLIQPQAVPPVAKLMDYGKFKFEYQKKQKEQRKKQSVVTVKEVRLSPVIDKGDFETKLRNGRKFLEKGNKVKVSIRFKGRMITHKEIGAKVLADFAEATQDIAIIEQRAKMDGRQMFMQLAPISDKK</sequence>
<organism>
    <name type="scientific">Streptococcus pyogenes serotype M3 (strain SSI-1)</name>
    <dbReference type="NCBI Taxonomy" id="193567"/>
    <lineage>
        <taxon>Bacteria</taxon>
        <taxon>Bacillati</taxon>
        <taxon>Bacillota</taxon>
        <taxon>Bacilli</taxon>
        <taxon>Lactobacillales</taxon>
        <taxon>Streptococcaceae</taxon>
        <taxon>Streptococcus</taxon>
    </lineage>
</organism>
<protein>
    <recommendedName>
        <fullName evidence="1">Translation initiation factor IF-3</fullName>
    </recommendedName>
</protein>
<gene>
    <name evidence="1" type="primary">infC</name>
    <name type="ordered locus">SPs1316</name>
</gene>
<name>IF3_STRPQ</name>
<dbReference type="EMBL" id="BA000034">
    <property type="protein sequence ID" value="BAC64411.1"/>
    <property type="status" value="ALT_INIT"/>
    <property type="molecule type" value="Genomic_DNA"/>
</dbReference>
<dbReference type="RefSeq" id="WP_002985152.1">
    <property type="nucleotide sequence ID" value="NC_004606.1"/>
</dbReference>
<dbReference type="SMR" id="P0DB87"/>
<dbReference type="GeneID" id="69901077"/>
<dbReference type="KEGG" id="sps:SPs1316"/>
<dbReference type="HOGENOM" id="CLU_054919_3_2_9"/>
<dbReference type="GO" id="GO:0005829">
    <property type="term" value="C:cytosol"/>
    <property type="evidence" value="ECO:0007669"/>
    <property type="project" value="TreeGrafter"/>
</dbReference>
<dbReference type="GO" id="GO:0016020">
    <property type="term" value="C:membrane"/>
    <property type="evidence" value="ECO:0007669"/>
    <property type="project" value="TreeGrafter"/>
</dbReference>
<dbReference type="GO" id="GO:0043022">
    <property type="term" value="F:ribosome binding"/>
    <property type="evidence" value="ECO:0007669"/>
    <property type="project" value="TreeGrafter"/>
</dbReference>
<dbReference type="GO" id="GO:0003743">
    <property type="term" value="F:translation initiation factor activity"/>
    <property type="evidence" value="ECO:0007669"/>
    <property type="project" value="UniProtKB-UniRule"/>
</dbReference>
<dbReference type="GO" id="GO:0032790">
    <property type="term" value="P:ribosome disassembly"/>
    <property type="evidence" value="ECO:0007669"/>
    <property type="project" value="TreeGrafter"/>
</dbReference>
<dbReference type="FunFam" id="3.10.20.80:FF:000001">
    <property type="entry name" value="Translation initiation factor IF-3"/>
    <property type="match status" value="1"/>
</dbReference>
<dbReference type="FunFam" id="3.30.110.10:FF:000001">
    <property type="entry name" value="Translation initiation factor IF-3"/>
    <property type="match status" value="1"/>
</dbReference>
<dbReference type="Gene3D" id="3.30.110.10">
    <property type="entry name" value="Translation initiation factor 3 (IF-3), C-terminal domain"/>
    <property type="match status" value="1"/>
</dbReference>
<dbReference type="Gene3D" id="3.10.20.80">
    <property type="entry name" value="Translation initiation factor 3 (IF-3), N-terminal domain"/>
    <property type="match status" value="1"/>
</dbReference>
<dbReference type="HAMAP" id="MF_00080">
    <property type="entry name" value="IF_3"/>
    <property type="match status" value="1"/>
</dbReference>
<dbReference type="InterPro" id="IPR036788">
    <property type="entry name" value="T_IF-3_C_sf"/>
</dbReference>
<dbReference type="InterPro" id="IPR036787">
    <property type="entry name" value="T_IF-3_N_sf"/>
</dbReference>
<dbReference type="InterPro" id="IPR019813">
    <property type="entry name" value="Translation_initiation_fac3_CS"/>
</dbReference>
<dbReference type="InterPro" id="IPR001288">
    <property type="entry name" value="Translation_initiation_fac_3"/>
</dbReference>
<dbReference type="InterPro" id="IPR019815">
    <property type="entry name" value="Translation_initiation_fac_3_C"/>
</dbReference>
<dbReference type="InterPro" id="IPR019814">
    <property type="entry name" value="Translation_initiation_fac_3_N"/>
</dbReference>
<dbReference type="NCBIfam" id="TIGR00168">
    <property type="entry name" value="infC"/>
    <property type="match status" value="1"/>
</dbReference>
<dbReference type="PANTHER" id="PTHR10938">
    <property type="entry name" value="TRANSLATION INITIATION FACTOR IF-3"/>
    <property type="match status" value="1"/>
</dbReference>
<dbReference type="PANTHER" id="PTHR10938:SF0">
    <property type="entry name" value="TRANSLATION INITIATION FACTOR IF-3, MITOCHONDRIAL"/>
    <property type="match status" value="1"/>
</dbReference>
<dbReference type="Pfam" id="PF00707">
    <property type="entry name" value="IF3_C"/>
    <property type="match status" value="1"/>
</dbReference>
<dbReference type="Pfam" id="PF05198">
    <property type="entry name" value="IF3_N"/>
    <property type="match status" value="1"/>
</dbReference>
<dbReference type="SUPFAM" id="SSF55200">
    <property type="entry name" value="Translation initiation factor IF3, C-terminal domain"/>
    <property type="match status" value="1"/>
</dbReference>
<dbReference type="SUPFAM" id="SSF54364">
    <property type="entry name" value="Translation initiation factor IF3, N-terminal domain"/>
    <property type="match status" value="1"/>
</dbReference>
<dbReference type="PROSITE" id="PS00938">
    <property type="entry name" value="IF3"/>
    <property type="match status" value="1"/>
</dbReference>
<feature type="chain" id="PRO_0000411381" description="Translation initiation factor IF-3">
    <location>
        <begin position="1"/>
        <end position="176"/>
    </location>
</feature>
<reference key="1">
    <citation type="journal article" date="2003" name="Genome Res.">
        <title>Genome sequence of an M3 strain of Streptococcus pyogenes reveals a large-scale genomic rearrangement in invasive strains and new insights into phage evolution.</title>
        <authorList>
            <person name="Nakagawa I."/>
            <person name="Kurokawa K."/>
            <person name="Yamashita A."/>
            <person name="Nakata M."/>
            <person name="Tomiyasu Y."/>
            <person name="Okahashi N."/>
            <person name="Kawabata S."/>
            <person name="Yamazaki K."/>
            <person name="Shiba T."/>
            <person name="Yasunaga T."/>
            <person name="Hayashi H."/>
            <person name="Hattori M."/>
            <person name="Hamada S."/>
        </authorList>
    </citation>
    <scope>NUCLEOTIDE SEQUENCE [LARGE SCALE GENOMIC DNA]</scope>
    <source>
        <strain>SSI-1</strain>
    </source>
</reference>
<evidence type="ECO:0000255" key="1">
    <source>
        <dbReference type="HAMAP-Rule" id="MF_00080"/>
    </source>
</evidence>
<evidence type="ECO:0000305" key="2"/>